<dbReference type="EMBL" id="AP008957">
    <property type="protein sequence ID" value="BAH32579.1"/>
    <property type="molecule type" value="Genomic_DNA"/>
</dbReference>
<dbReference type="RefSeq" id="WP_003940751.1">
    <property type="nucleotide sequence ID" value="NC_012490.1"/>
</dbReference>
<dbReference type="SMR" id="C0ZW44"/>
<dbReference type="GeneID" id="93803286"/>
<dbReference type="KEGG" id="rer:RER_18710"/>
<dbReference type="eggNOG" id="COG1841">
    <property type="taxonomic scope" value="Bacteria"/>
</dbReference>
<dbReference type="HOGENOM" id="CLU_131047_2_0_11"/>
<dbReference type="Proteomes" id="UP000002204">
    <property type="component" value="Chromosome"/>
</dbReference>
<dbReference type="GO" id="GO:0022625">
    <property type="term" value="C:cytosolic large ribosomal subunit"/>
    <property type="evidence" value="ECO:0007669"/>
    <property type="project" value="TreeGrafter"/>
</dbReference>
<dbReference type="GO" id="GO:0003735">
    <property type="term" value="F:structural constituent of ribosome"/>
    <property type="evidence" value="ECO:0007669"/>
    <property type="project" value="InterPro"/>
</dbReference>
<dbReference type="GO" id="GO:0006412">
    <property type="term" value="P:translation"/>
    <property type="evidence" value="ECO:0007669"/>
    <property type="project" value="UniProtKB-UniRule"/>
</dbReference>
<dbReference type="CDD" id="cd01658">
    <property type="entry name" value="Ribosomal_L30"/>
    <property type="match status" value="1"/>
</dbReference>
<dbReference type="FunFam" id="3.30.1390.20:FF:000001">
    <property type="entry name" value="50S ribosomal protein L30"/>
    <property type="match status" value="1"/>
</dbReference>
<dbReference type="Gene3D" id="3.30.1390.20">
    <property type="entry name" value="Ribosomal protein L30, ferredoxin-like fold domain"/>
    <property type="match status" value="1"/>
</dbReference>
<dbReference type="HAMAP" id="MF_01371_B">
    <property type="entry name" value="Ribosomal_uL30_B"/>
    <property type="match status" value="1"/>
</dbReference>
<dbReference type="InterPro" id="IPR036919">
    <property type="entry name" value="Ribo_uL30_ferredoxin-like_sf"/>
</dbReference>
<dbReference type="InterPro" id="IPR005996">
    <property type="entry name" value="Ribosomal_uL30_bac-type"/>
</dbReference>
<dbReference type="InterPro" id="IPR018038">
    <property type="entry name" value="Ribosomal_uL30_CS"/>
</dbReference>
<dbReference type="InterPro" id="IPR016082">
    <property type="entry name" value="Ribosomal_uL30_ferredoxin-like"/>
</dbReference>
<dbReference type="NCBIfam" id="TIGR01308">
    <property type="entry name" value="rpmD_bact"/>
    <property type="match status" value="1"/>
</dbReference>
<dbReference type="PANTHER" id="PTHR15892:SF2">
    <property type="entry name" value="LARGE RIBOSOMAL SUBUNIT PROTEIN UL30M"/>
    <property type="match status" value="1"/>
</dbReference>
<dbReference type="PANTHER" id="PTHR15892">
    <property type="entry name" value="MITOCHONDRIAL RIBOSOMAL PROTEIN L30"/>
    <property type="match status" value="1"/>
</dbReference>
<dbReference type="Pfam" id="PF00327">
    <property type="entry name" value="Ribosomal_L30"/>
    <property type="match status" value="1"/>
</dbReference>
<dbReference type="PIRSF" id="PIRSF002211">
    <property type="entry name" value="Ribosomal_L30_bac-type"/>
    <property type="match status" value="1"/>
</dbReference>
<dbReference type="SUPFAM" id="SSF55129">
    <property type="entry name" value="Ribosomal protein L30p/L7e"/>
    <property type="match status" value="1"/>
</dbReference>
<dbReference type="PROSITE" id="PS00634">
    <property type="entry name" value="RIBOSOMAL_L30"/>
    <property type="match status" value="1"/>
</dbReference>
<evidence type="ECO:0000255" key="1">
    <source>
        <dbReference type="HAMAP-Rule" id="MF_01371"/>
    </source>
</evidence>
<evidence type="ECO:0000305" key="2"/>
<name>RL30_RHOE4</name>
<feature type="chain" id="PRO_1000215071" description="Large ribosomal subunit protein uL30">
    <location>
        <begin position="1"/>
        <end position="59"/>
    </location>
</feature>
<reference key="1">
    <citation type="submission" date="2005-03" db="EMBL/GenBank/DDBJ databases">
        <title>Comparison of the complete genome sequences of Rhodococcus erythropolis PR4 and Rhodococcus opacus B4.</title>
        <authorList>
            <person name="Takarada H."/>
            <person name="Sekine M."/>
            <person name="Hosoyama A."/>
            <person name="Yamada R."/>
            <person name="Fujisawa T."/>
            <person name="Omata S."/>
            <person name="Shimizu A."/>
            <person name="Tsukatani N."/>
            <person name="Tanikawa S."/>
            <person name="Fujita N."/>
            <person name="Harayama S."/>
        </authorList>
    </citation>
    <scope>NUCLEOTIDE SEQUENCE [LARGE SCALE GENOMIC DNA]</scope>
    <source>
        <strain>PR4 / NBRC 100887</strain>
    </source>
</reference>
<organism>
    <name type="scientific">Rhodococcus erythropolis (strain PR4 / NBRC 100887)</name>
    <dbReference type="NCBI Taxonomy" id="234621"/>
    <lineage>
        <taxon>Bacteria</taxon>
        <taxon>Bacillati</taxon>
        <taxon>Actinomycetota</taxon>
        <taxon>Actinomycetes</taxon>
        <taxon>Mycobacteriales</taxon>
        <taxon>Nocardiaceae</taxon>
        <taxon>Rhodococcus</taxon>
        <taxon>Rhodococcus erythropolis group</taxon>
    </lineage>
</organism>
<accession>C0ZW44</accession>
<sequence>MADLKVTQIKSIIGTKQNQKDSLRTLGLKGIRQTVVREDNAQNRGLINVVRHLVTVEEV</sequence>
<proteinExistence type="inferred from homology"/>
<comment type="subunit">
    <text evidence="1">Part of the 50S ribosomal subunit.</text>
</comment>
<comment type="similarity">
    <text evidence="1">Belongs to the universal ribosomal protein uL30 family.</text>
</comment>
<gene>
    <name evidence="1" type="primary">rpmD</name>
    <name type="ordered locus">RER_18710</name>
</gene>
<protein>
    <recommendedName>
        <fullName evidence="1">Large ribosomal subunit protein uL30</fullName>
    </recommendedName>
    <alternativeName>
        <fullName evidence="2">50S ribosomal protein L30</fullName>
    </alternativeName>
</protein>
<keyword id="KW-0687">Ribonucleoprotein</keyword>
<keyword id="KW-0689">Ribosomal protein</keyword>